<evidence type="ECO:0000250" key="1">
    <source>
        <dbReference type="UniProtKB" id="O60858"/>
    </source>
</evidence>
<evidence type="ECO:0000255" key="2"/>
<evidence type="ECO:0000255" key="3">
    <source>
        <dbReference type="PROSITE-ProRule" id="PRU00024"/>
    </source>
</evidence>
<evidence type="ECO:0000255" key="4">
    <source>
        <dbReference type="PROSITE-ProRule" id="PRU00175"/>
    </source>
</evidence>
<evidence type="ECO:0000305" key="5"/>
<feature type="chain" id="PRO_0000056029" description="E3 ubiquitin-protein ligase TRIM13">
    <location>
        <begin position="1"/>
        <end position="407"/>
    </location>
</feature>
<feature type="transmembrane region" description="Helical" evidence="2">
    <location>
        <begin position="316"/>
        <end position="336"/>
    </location>
</feature>
<feature type="zinc finger region" description="RING-type" evidence="4">
    <location>
        <begin position="10"/>
        <end position="58"/>
    </location>
</feature>
<feature type="zinc finger region" description="B box-type" evidence="3">
    <location>
        <begin position="89"/>
        <end position="131"/>
    </location>
</feature>
<feature type="coiled-coil region" evidence="2">
    <location>
        <begin position="172"/>
        <end position="200"/>
    </location>
</feature>
<feature type="binding site" evidence="3">
    <location>
        <position position="94"/>
    </location>
    <ligand>
        <name>Zn(2+)</name>
        <dbReference type="ChEBI" id="CHEBI:29105"/>
    </ligand>
</feature>
<feature type="binding site" evidence="3">
    <location>
        <position position="97"/>
    </location>
    <ligand>
        <name>Zn(2+)</name>
        <dbReference type="ChEBI" id="CHEBI:29105"/>
    </ligand>
</feature>
<feature type="binding site" evidence="3">
    <location>
        <position position="117"/>
    </location>
    <ligand>
        <name>Zn(2+)</name>
        <dbReference type="ChEBI" id="CHEBI:29105"/>
    </ligand>
</feature>
<feature type="binding site" evidence="3">
    <location>
        <position position="123"/>
    </location>
    <ligand>
        <name>Zn(2+)</name>
        <dbReference type="ChEBI" id="CHEBI:29105"/>
    </ligand>
</feature>
<feature type="sequence conflict" description="In Ref. 2; BAC25419." evidence="5" ref="2">
    <original>W</original>
    <variation>R</variation>
    <location>
        <position position="47"/>
    </location>
</feature>
<feature type="sequence conflict" description="In Ref. 1; AAK56791." evidence="5" ref="1">
    <original>NAF</original>
    <variation>KCL</variation>
    <location>
        <begin position="140"/>
        <end position="142"/>
    </location>
</feature>
<feature type="sequence conflict" description="In Ref. 1; AAK56791." evidence="5" ref="1">
    <original>F</original>
    <variation>L</variation>
    <location>
        <position position="146"/>
    </location>
</feature>
<feature type="sequence conflict" description="In Ref. 6; AAK51689." evidence="5" ref="6">
    <original>F</original>
    <variation>V</variation>
    <location>
        <position position="185"/>
    </location>
</feature>
<feature type="sequence conflict" description="In Ref. 6; AAK51689." evidence="5" ref="6">
    <original>Q</original>
    <variation>QKLQ</variation>
    <location>
        <position position="190"/>
    </location>
</feature>
<feature type="sequence conflict" description="In Ref. 6; AAK51689." evidence="5" ref="6">
    <original>S</original>
    <variation>C</variation>
    <location>
        <position position="202"/>
    </location>
</feature>
<feature type="sequence conflict" description="In Ref. 6; AAK51689." evidence="5" ref="6">
    <original>D</original>
    <variation>E</variation>
    <location>
        <position position="216"/>
    </location>
</feature>
<feature type="sequence conflict" description="In Ref. 6; AAK51689." evidence="5" ref="6">
    <original>Q</original>
    <variation>H</variation>
    <location>
        <position position="227"/>
    </location>
</feature>
<accession>Q9CYB0</accession>
<accession>A6H6L2</accession>
<accession>Q8CEV0</accession>
<accession>Q923J0</accession>
<accession>Q925P1</accession>
<accession>Q99PQ0</accession>
<sequence>MELLEEDLTCPICCSLFDDPRVLPCSHNFCKKCLEGLLEGNVRNSLWRPSPFKCPTCRKETSATGVNSLQVNYSLKGIVEKYNKIKISPKMPVCKGHLGQPLNIFCVTDMQLICGICATRGEHTKHVFSSIEDAYAREKNAFESLFQSFETWRRGDALSRLDTLETNKRKALQLLTKDSDKVKEFFEKLQHTLDQKKNEILSDFETMKLAVMQTYDPEINKINTILQEQRMAFNIAEAFKDVSEPIIFLQQMQEFREKIKVIKETPLPHSNLPTSPLMKNFDTSQWGDIKLVDVDKLSLPQDTGVFTSKIPWYPYLLLMMVVLLGLLIFFGPTVFLEWSPLDELATWKDYLSSFNSYLTKSADFIEQSVFYWEQMTDGFFIFGERVKNVSLVALNNVAEFICKYKLL</sequence>
<organism>
    <name type="scientific">Mus musculus</name>
    <name type="common">Mouse</name>
    <dbReference type="NCBI Taxonomy" id="10090"/>
    <lineage>
        <taxon>Eukaryota</taxon>
        <taxon>Metazoa</taxon>
        <taxon>Chordata</taxon>
        <taxon>Craniata</taxon>
        <taxon>Vertebrata</taxon>
        <taxon>Euteleostomi</taxon>
        <taxon>Mammalia</taxon>
        <taxon>Eutheria</taxon>
        <taxon>Euarchontoglires</taxon>
        <taxon>Glires</taxon>
        <taxon>Rodentia</taxon>
        <taxon>Myomorpha</taxon>
        <taxon>Muroidea</taxon>
        <taxon>Muridae</taxon>
        <taxon>Murinae</taxon>
        <taxon>Mus</taxon>
        <taxon>Mus</taxon>
    </lineage>
</organism>
<reference key="1">
    <citation type="submission" date="2001-04" db="EMBL/GenBank/DDBJ databases">
        <title>Genomic organization of the murine Rfp2 gene.</title>
        <authorList>
            <person name="Borodina T.A."/>
            <person name="Baranova A.V."/>
        </authorList>
    </citation>
    <scope>NUCLEOTIDE SEQUENCE [GENOMIC DNA]</scope>
</reference>
<reference key="2">
    <citation type="journal article" date="2005" name="Science">
        <title>The transcriptional landscape of the mammalian genome.</title>
        <authorList>
            <person name="Carninci P."/>
            <person name="Kasukawa T."/>
            <person name="Katayama S."/>
            <person name="Gough J."/>
            <person name="Frith M.C."/>
            <person name="Maeda N."/>
            <person name="Oyama R."/>
            <person name="Ravasi T."/>
            <person name="Lenhard B."/>
            <person name="Wells C."/>
            <person name="Kodzius R."/>
            <person name="Shimokawa K."/>
            <person name="Bajic V.B."/>
            <person name="Brenner S.E."/>
            <person name="Batalov S."/>
            <person name="Forrest A.R."/>
            <person name="Zavolan M."/>
            <person name="Davis M.J."/>
            <person name="Wilming L.G."/>
            <person name="Aidinis V."/>
            <person name="Allen J.E."/>
            <person name="Ambesi-Impiombato A."/>
            <person name="Apweiler R."/>
            <person name="Aturaliya R.N."/>
            <person name="Bailey T.L."/>
            <person name="Bansal M."/>
            <person name="Baxter L."/>
            <person name="Beisel K.W."/>
            <person name="Bersano T."/>
            <person name="Bono H."/>
            <person name="Chalk A.M."/>
            <person name="Chiu K.P."/>
            <person name="Choudhary V."/>
            <person name="Christoffels A."/>
            <person name="Clutterbuck D.R."/>
            <person name="Crowe M.L."/>
            <person name="Dalla E."/>
            <person name="Dalrymple B.P."/>
            <person name="de Bono B."/>
            <person name="Della Gatta G."/>
            <person name="di Bernardo D."/>
            <person name="Down T."/>
            <person name="Engstrom P."/>
            <person name="Fagiolini M."/>
            <person name="Faulkner G."/>
            <person name="Fletcher C.F."/>
            <person name="Fukushima T."/>
            <person name="Furuno M."/>
            <person name="Futaki S."/>
            <person name="Gariboldi M."/>
            <person name="Georgii-Hemming P."/>
            <person name="Gingeras T.R."/>
            <person name="Gojobori T."/>
            <person name="Green R.E."/>
            <person name="Gustincich S."/>
            <person name="Harbers M."/>
            <person name="Hayashi Y."/>
            <person name="Hensch T.K."/>
            <person name="Hirokawa N."/>
            <person name="Hill D."/>
            <person name="Huminiecki L."/>
            <person name="Iacono M."/>
            <person name="Ikeo K."/>
            <person name="Iwama A."/>
            <person name="Ishikawa T."/>
            <person name="Jakt M."/>
            <person name="Kanapin A."/>
            <person name="Katoh M."/>
            <person name="Kawasawa Y."/>
            <person name="Kelso J."/>
            <person name="Kitamura H."/>
            <person name="Kitano H."/>
            <person name="Kollias G."/>
            <person name="Krishnan S.P."/>
            <person name="Kruger A."/>
            <person name="Kummerfeld S.K."/>
            <person name="Kurochkin I.V."/>
            <person name="Lareau L.F."/>
            <person name="Lazarevic D."/>
            <person name="Lipovich L."/>
            <person name="Liu J."/>
            <person name="Liuni S."/>
            <person name="McWilliam S."/>
            <person name="Madan Babu M."/>
            <person name="Madera M."/>
            <person name="Marchionni L."/>
            <person name="Matsuda H."/>
            <person name="Matsuzawa S."/>
            <person name="Miki H."/>
            <person name="Mignone F."/>
            <person name="Miyake S."/>
            <person name="Morris K."/>
            <person name="Mottagui-Tabar S."/>
            <person name="Mulder N."/>
            <person name="Nakano N."/>
            <person name="Nakauchi H."/>
            <person name="Ng P."/>
            <person name="Nilsson R."/>
            <person name="Nishiguchi S."/>
            <person name="Nishikawa S."/>
            <person name="Nori F."/>
            <person name="Ohara O."/>
            <person name="Okazaki Y."/>
            <person name="Orlando V."/>
            <person name="Pang K.C."/>
            <person name="Pavan W.J."/>
            <person name="Pavesi G."/>
            <person name="Pesole G."/>
            <person name="Petrovsky N."/>
            <person name="Piazza S."/>
            <person name="Reed J."/>
            <person name="Reid J.F."/>
            <person name="Ring B.Z."/>
            <person name="Ringwald M."/>
            <person name="Rost B."/>
            <person name="Ruan Y."/>
            <person name="Salzberg S.L."/>
            <person name="Sandelin A."/>
            <person name="Schneider C."/>
            <person name="Schoenbach C."/>
            <person name="Sekiguchi K."/>
            <person name="Semple C.A."/>
            <person name="Seno S."/>
            <person name="Sessa L."/>
            <person name="Sheng Y."/>
            <person name="Shibata Y."/>
            <person name="Shimada H."/>
            <person name="Shimada K."/>
            <person name="Silva D."/>
            <person name="Sinclair B."/>
            <person name="Sperling S."/>
            <person name="Stupka E."/>
            <person name="Sugiura K."/>
            <person name="Sultana R."/>
            <person name="Takenaka Y."/>
            <person name="Taki K."/>
            <person name="Tammoja K."/>
            <person name="Tan S.L."/>
            <person name="Tang S."/>
            <person name="Taylor M.S."/>
            <person name="Tegner J."/>
            <person name="Teichmann S.A."/>
            <person name="Ueda H.R."/>
            <person name="van Nimwegen E."/>
            <person name="Verardo R."/>
            <person name="Wei C.L."/>
            <person name="Yagi K."/>
            <person name="Yamanishi H."/>
            <person name="Zabarovsky E."/>
            <person name="Zhu S."/>
            <person name="Zimmer A."/>
            <person name="Hide W."/>
            <person name="Bult C."/>
            <person name="Grimmond S.M."/>
            <person name="Teasdale R.D."/>
            <person name="Liu E.T."/>
            <person name="Brusic V."/>
            <person name="Quackenbush J."/>
            <person name="Wahlestedt C."/>
            <person name="Mattick J.S."/>
            <person name="Hume D.A."/>
            <person name="Kai C."/>
            <person name="Sasaki D."/>
            <person name="Tomaru Y."/>
            <person name="Fukuda S."/>
            <person name="Kanamori-Katayama M."/>
            <person name="Suzuki M."/>
            <person name="Aoki J."/>
            <person name="Arakawa T."/>
            <person name="Iida J."/>
            <person name="Imamura K."/>
            <person name="Itoh M."/>
            <person name="Kato T."/>
            <person name="Kawaji H."/>
            <person name="Kawagashira N."/>
            <person name="Kawashima T."/>
            <person name="Kojima M."/>
            <person name="Kondo S."/>
            <person name="Konno H."/>
            <person name="Nakano K."/>
            <person name="Ninomiya N."/>
            <person name="Nishio T."/>
            <person name="Okada M."/>
            <person name="Plessy C."/>
            <person name="Shibata K."/>
            <person name="Shiraki T."/>
            <person name="Suzuki S."/>
            <person name="Tagami M."/>
            <person name="Waki K."/>
            <person name="Watahiki A."/>
            <person name="Okamura-Oho Y."/>
            <person name="Suzuki H."/>
            <person name="Kawai J."/>
            <person name="Hayashizaki Y."/>
        </authorList>
    </citation>
    <scope>NUCLEOTIDE SEQUENCE [LARGE SCALE MRNA]</scope>
    <source>
        <strain>C57BL/6J</strain>
        <tissue>Embryo</tissue>
        <tissue>Head</tissue>
    </source>
</reference>
<reference key="3">
    <citation type="submission" date="2005-07" db="EMBL/GenBank/DDBJ databases">
        <authorList>
            <person name="Mural R.J."/>
            <person name="Adams M.D."/>
            <person name="Myers E.W."/>
            <person name="Smith H.O."/>
            <person name="Venter J.C."/>
        </authorList>
    </citation>
    <scope>NUCLEOTIDE SEQUENCE [LARGE SCALE GENOMIC DNA]</scope>
</reference>
<reference key="4">
    <citation type="journal article" date="2004" name="Genome Res.">
        <title>The status, quality, and expansion of the NIH full-length cDNA project: the Mammalian Gene Collection (MGC).</title>
        <authorList>
            <consortium name="The MGC Project Team"/>
        </authorList>
    </citation>
    <scope>NUCLEOTIDE SEQUENCE [LARGE SCALE MRNA]</scope>
    <source>
        <tissue>Brain</tissue>
    </source>
</reference>
<reference key="5">
    <citation type="journal article" date="2001" name="EMBO J.">
        <title>The tripartite motif family identifies cell compartments.</title>
        <authorList>
            <person name="Reymond A."/>
            <person name="Meroni G."/>
            <person name="Fantozzi A."/>
            <person name="Merla G."/>
            <person name="Cairo S."/>
            <person name="Luzi L."/>
            <person name="Riganelli D."/>
            <person name="Zanaria E."/>
            <person name="Messali S."/>
            <person name="Cainarca S."/>
            <person name="Guffanti A."/>
            <person name="Minucci S."/>
            <person name="Pelicci P.G."/>
            <person name="Ballabio A."/>
        </authorList>
    </citation>
    <scope>NUCLEOTIDE SEQUENCE [MRNA] OF 1-134</scope>
</reference>
<reference key="6">
    <citation type="journal article" date="2000" name="Genomics">
        <title>Comparative sequence analysis of a region on human chromosome 13q14, frequently deleted in B-cell chronic lymphocytic leukemia, and its homologous region on mouse chromosome 14.</title>
        <authorList>
            <person name="Kapanadze B."/>
            <person name="Makeeva N."/>
            <person name="Corcoran M."/>
            <person name="Jareborg N."/>
            <person name="Hammarsund M."/>
            <person name="Baranova A."/>
            <person name="Zabarovsky E."/>
            <person name="Vorontsova O."/>
            <person name="Merup M."/>
            <person name="Gahrton G."/>
            <person name="Jansson M."/>
            <person name="Yankovsky N."/>
            <person name="Einhorn S."/>
            <person name="Oscier D."/>
            <person name="Grander D."/>
            <person name="Sangfelt O."/>
        </authorList>
    </citation>
    <scope>NUCLEOTIDE SEQUENCE [GENOMIC DNA] OF 1-228</scope>
</reference>
<name>TRI13_MOUSE</name>
<keyword id="KW-0175">Coiled coil</keyword>
<keyword id="KW-0256">Endoplasmic reticulum</keyword>
<keyword id="KW-0391">Immunity</keyword>
<keyword id="KW-0399">Innate immunity</keyword>
<keyword id="KW-0472">Membrane</keyword>
<keyword id="KW-0479">Metal-binding</keyword>
<keyword id="KW-1185">Reference proteome</keyword>
<keyword id="KW-0808">Transferase</keyword>
<keyword id="KW-0812">Transmembrane</keyword>
<keyword id="KW-1133">Transmembrane helix</keyword>
<keyword id="KW-0832">Ubl conjugation</keyword>
<keyword id="KW-0833">Ubl conjugation pathway</keyword>
<keyword id="KW-0862">Zinc</keyword>
<keyword id="KW-0863">Zinc-finger</keyword>
<gene>
    <name type="primary">Trim13</name>
    <name type="synonym">Rfp2</name>
</gene>
<comment type="function">
    <text evidence="1">Endoplasmic reticulum (ER) membrane anchored E3 ligase involved in the retrotranslocation and turnover of membrane and secretory proteins from the ER through a set of processes named ER-associated degradation (ERAD). This process acts on misfolded proteins as well as in the regulated degradation of correctly folded proteins. Enhances ionizing radiation-induced p53/TP53 stability and apoptosis via ubiquitinating MDM2 and AKT1 and decreasing AKT1 kinase activity through MDM2 and AKT1 proteasomal degradation. Regulates ER stress-induced autophagy, and may act as a tumor suppressor. Also plays a role in innate immune response by stimulating NF-kappa-B activity in the TLR2 signaling pathway. Ubiquitinates TRAF6 via the 'Lys-29'-linked polyubiquitination chain resulting in NF-kappa-B activation. Participates as well in T-cell receptor-mediated NF-kappa-B activation. In the presence of TNF, modulates the IKK complex by regulating IKBKG/NEMO ubiquitination leading to the repression of NF-kappa-B.</text>
</comment>
<comment type="catalytic activity">
    <reaction evidence="1">
        <text>S-ubiquitinyl-[E2 ubiquitin-conjugating enzyme]-L-cysteine + [acceptor protein]-L-lysine = [E2 ubiquitin-conjugating enzyme]-L-cysteine + N(6)-ubiquitinyl-[acceptor protein]-L-lysine.</text>
        <dbReference type="EC" id="2.3.2.27"/>
    </reaction>
</comment>
<comment type="pathway">
    <text evidence="1">Protein modification; protein ubiquitination.</text>
</comment>
<comment type="subunit">
    <text evidence="1">Interacts (via C-terminal domain) with VCP. Interacts with AKT1; the interaction ubiquitinates AKT1 and leads to its proteasomal degradation. Interacts with MDM2; the interaction ubiquitinates AKT1 and leads to its proteasomal degradation. Interacts with p62/SQSTM1. Interacts with TRAF6. Interacts with IKBKG/NEMO.</text>
</comment>
<comment type="subcellular location">
    <subcellularLocation>
        <location evidence="1">Endoplasmic reticulum membrane</location>
        <topology evidence="1">Single-pass membrane protein</topology>
    </subcellularLocation>
    <text evidence="1">Concentrates and colocalizes with p62/SQSTM1 and ZFYVE1 at the perinuclear endoplasmic reticulum.</text>
</comment>
<comment type="domain">
    <text evidence="1">The coiled-coil domain is required for the induction of autophagy during endoplasmic reticulum (ER) stress.</text>
</comment>
<comment type="domain">
    <text evidence="1">The RING-type zinc finger is required for auto-polyubiquitination.</text>
</comment>
<comment type="domain">
    <text evidence="1">The C-terminal transmembrane domain is indispensable for the localization to the ER.</text>
</comment>
<comment type="PTM">
    <text evidence="1">Auto-ubiquitinated; requires the RING-type zinc finger. Auto-polyubiquitination leads to proteasomal degradation.</text>
</comment>
<comment type="similarity">
    <text evidence="5">Belongs to the TRIM/RBCC family.</text>
</comment>
<dbReference type="EC" id="2.3.2.27"/>
<dbReference type="EMBL" id="AY033605">
    <property type="protein sequence ID" value="AAK56791.1"/>
    <property type="molecule type" value="Genomic_DNA"/>
</dbReference>
<dbReference type="EMBL" id="AK013959">
    <property type="protein sequence ID" value="BAC25419.1"/>
    <property type="molecule type" value="mRNA"/>
</dbReference>
<dbReference type="EMBL" id="AK017850">
    <property type="protein sequence ID" value="BAB30973.1"/>
    <property type="molecule type" value="mRNA"/>
</dbReference>
<dbReference type="EMBL" id="CH466535">
    <property type="protein sequence ID" value="EDL36095.1"/>
    <property type="molecule type" value="Genomic_DNA"/>
</dbReference>
<dbReference type="EMBL" id="CH466535">
    <property type="protein sequence ID" value="EDL36096.1"/>
    <property type="molecule type" value="Genomic_DNA"/>
</dbReference>
<dbReference type="EMBL" id="BC138576">
    <property type="protein sequence ID" value="AAI38577.1"/>
    <property type="molecule type" value="mRNA"/>
</dbReference>
<dbReference type="EMBL" id="BC145915">
    <property type="protein sequence ID" value="AAI45916.1"/>
    <property type="molecule type" value="mRNA"/>
</dbReference>
<dbReference type="EMBL" id="AF220129">
    <property type="protein sequence ID" value="AAG53502.1"/>
    <property type="molecule type" value="mRNA"/>
</dbReference>
<dbReference type="EMBL" id="AF302839">
    <property type="protein sequence ID" value="AAK51689.1"/>
    <property type="molecule type" value="Genomic_DNA"/>
</dbReference>
<dbReference type="CCDS" id="CCDS27186.1"/>
<dbReference type="RefSeq" id="NP_001157692.1">
    <property type="nucleotide sequence ID" value="NM_001164220.1"/>
</dbReference>
<dbReference type="RefSeq" id="NP_075722.1">
    <property type="nucleotide sequence ID" value="NM_023233.3"/>
</dbReference>
<dbReference type="RefSeq" id="XP_006519455.1">
    <property type="nucleotide sequence ID" value="XM_006519392.3"/>
</dbReference>
<dbReference type="SMR" id="Q9CYB0"/>
<dbReference type="BioGRID" id="211583">
    <property type="interactions" value="3"/>
</dbReference>
<dbReference type="FunCoup" id="Q9CYB0">
    <property type="interactions" value="1862"/>
</dbReference>
<dbReference type="STRING" id="10090.ENSMUSP00000128509"/>
<dbReference type="GlyGen" id="Q9CYB0">
    <property type="glycosylation" value="1 site, 1 N-linked glycan (1 site)"/>
</dbReference>
<dbReference type="iPTMnet" id="Q9CYB0"/>
<dbReference type="PhosphoSitePlus" id="Q9CYB0"/>
<dbReference type="SwissPalm" id="Q9CYB0"/>
<dbReference type="PaxDb" id="10090-ENSMUSP00000128509"/>
<dbReference type="PeptideAtlas" id="Q9CYB0"/>
<dbReference type="ProteomicsDB" id="258971"/>
<dbReference type="Antibodypedia" id="638">
    <property type="antibodies" value="237 antibodies from 27 providers"/>
</dbReference>
<dbReference type="DNASU" id="66597"/>
<dbReference type="Ensembl" id="ENSMUST00000039562.8">
    <property type="protein sequence ID" value="ENSMUSP00000045009.7"/>
    <property type="gene ID" value="ENSMUSG00000035235.14"/>
</dbReference>
<dbReference type="Ensembl" id="ENSMUST00000165015.9">
    <property type="protein sequence ID" value="ENSMUSP00000128509.2"/>
    <property type="gene ID" value="ENSMUSG00000035235.14"/>
</dbReference>
<dbReference type="GeneID" id="66597"/>
<dbReference type="KEGG" id="mmu:66597"/>
<dbReference type="UCSC" id="uc007ufy.2">
    <property type="organism name" value="mouse"/>
</dbReference>
<dbReference type="AGR" id="MGI:1913847"/>
<dbReference type="CTD" id="10206"/>
<dbReference type="MGI" id="MGI:1913847">
    <property type="gene designation" value="Trim13"/>
</dbReference>
<dbReference type="VEuPathDB" id="HostDB:ENSMUSG00000035235"/>
<dbReference type="eggNOG" id="KOG2177">
    <property type="taxonomic scope" value="Eukaryota"/>
</dbReference>
<dbReference type="GeneTree" id="ENSGT00940000159715"/>
<dbReference type="HOGENOM" id="CLU_053708_0_0_1"/>
<dbReference type="InParanoid" id="Q9CYB0"/>
<dbReference type="OMA" id="WRQSPFK"/>
<dbReference type="OrthoDB" id="6105938at2759"/>
<dbReference type="PhylomeDB" id="Q9CYB0"/>
<dbReference type="TreeFam" id="TF331669"/>
<dbReference type="UniPathway" id="UPA00143"/>
<dbReference type="BioGRID-ORCS" id="66597">
    <property type="hits" value="0 hits in 75 CRISPR screens"/>
</dbReference>
<dbReference type="PRO" id="PR:Q9CYB0"/>
<dbReference type="Proteomes" id="UP000000589">
    <property type="component" value="Chromosome 14"/>
</dbReference>
<dbReference type="RNAct" id="Q9CYB0">
    <property type="molecule type" value="protein"/>
</dbReference>
<dbReference type="Bgee" id="ENSMUSG00000035235">
    <property type="expression patterns" value="Expressed in animal zygote and 257 other cell types or tissues"/>
</dbReference>
<dbReference type="GO" id="GO:0005737">
    <property type="term" value="C:cytoplasm"/>
    <property type="evidence" value="ECO:0000314"/>
    <property type="project" value="MGI"/>
</dbReference>
<dbReference type="GO" id="GO:0005789">
    <property type="term" value="C:endoplasmic reticulum membrane"/>
    <property type="evidence" value="ECO:0000250"/>
    <property type="project" value="UniProtKB"/>
</dbReference>
<dbReference type="GO" id="GO:0097038">
    <property type="term" value="C:perinuclear endoplasmic reticulum"/>
    <property type="evidence" value="ECO:0000250"/>
    <property type="project" value="UniProtKB"/>
</dbReference>
<dbReference type="GO" id="GO:0003713">
    <property type="term" value="F:transcription coactivator activity"/>
    <property type="evidence" value="ECO:0007669"/>
    <property type="project" value="Ensembl"/>
</dbReference>
<dbReference type="GO" id="GO:0061659">
    <property type="term" value="F:ubiquitin-like protein ligase activity"/>
    <property type="evidence" value="ECO:0000250"/>
    <property type="project" value="UniProtKB"/>
</dbReference>
<dbReference type="GO" id="GO:0004842">
    <property type="term" value="F:ubiquitin-protein transferase activity"/>
    <property type="evidence" value="ECO:0007669"/>
    <property type="project" value="Ensembl"/>
</dbReference>
<dbReference type="GO" id="GO:0008270">
    <property type="term" value="F:zinc ion binding"/>
    <property type="evidence" value="ECO:0007669"/>
    <property type="project" value="UniProtKB-KW"/>
</dbReference>
<dbReference type="GO" id="GO:0036503">
    <property type="term" value="P:ERAD pathway"/>
    <property type="evidence" value="ECO:0000250"/>
    <property type="project" value="UniProtKB"/>
</dbReference>
<dbReference type="GO" id="GO:0045087">
    <property type="term" value="P:innate immune response"/>
    <property type="evidence" value="ECO:0007669"/>
    <property type="project" value="UniProtKB-KW"/>
</dbReference>
<dbReference type="GO" id="GO:0032897">
    <property type="term" value="P:negative regulation of viral transcription"/>
    <property type="evidence" value="ECO:0007669"/>
    <property type="project" value="Ensembl"/>
</dbReference>
<dbReference type="GO" id="GO:0043123">
    <property type="term" value="P:positive regulation of canonical NF-kappaB signal transduction"/>
    <property type="evidence" value="ECO:0007669"/>
    <property type="project" value="Ensembl"/>
</dbReference>
<dbReference type="GO" id="GO:0016239">
    <property type="term" value="P:positive regulation of macroautophagy"/>
    <property type="evidence" value="ECO:0000250"/>
    <property type="project" value="UniProtKB"/>
</dbReference>
<dbReference type="GO" id="GO:0043161">
    <property type="term" value="P:proteasome-mediated ubiquitin-dependent protein catabolic process"/>
    <property type="evidence" value="ECO:0000250"/>
    <property type="project" value="UniProtKB"/>
</dbReference>
<dbReference type="GO" id="GO:0051865">
    <property type="term" value="P:protein autoubiquitination"/>
    <property type="evidence" value="ECO:0000250"/>
    <property type="project" value="UniProtKB"/>
</dbReference>
<dbReference type="GO" id="GO:0044790">
    <property type="term" value="P:suppression of viral release by host"/>
    <property type="evidence" value="ECO:0007669"/>
    <property type="project" value="Ensembl"/>
</dbReference>
<dbReference type="CDD" id="cd19767">
    <property type="entry name" value="Bbox2_TRIM13_C-XI"/>
    <property type="match status" value="1"/>
</dbReference>
<dbReference type="CDD" id="cd16762">
    <property type="entry name" value="RING-HC_TRIM13_C-V"/>
    <property type="match status" value="1"/>
</dbReference>
<dbReference type="FunFam" id="3.30.40.10:FF:000386">
    <property type="entry name" value="E3 ubiquitin-protein ligase TRIM13"/>
    <property type="match status" value="1"/>
</dbReference>
<dbReference type="Gene3D" id="3.30.160.60">
    <property type="entry name" value="Classic Zinc Finger"/>
    <property type="match status" value="1"/>
</dbReference>
<dbReference type="Gene3D" id="3.30.40.10">
    <property type="entry name" value="Zinc/RING finger domain, C3HC4 (zinc finger)"/>
    <property type="match status" value="1"/>
</dbReference>
<dbReference type="InterPro" id="IPR050143">
    <property type="entry name" value="TRIM/RBCC"/>
</dbReference>
<dbReference type="InterPro" id="IPR027370">
    <property type="entry name" value="Znf-RING_euk"/>
</dbReference>
<dbReference type="InterPro" id="IPR000315">
    <property type="entry name" value="Znf_B-box"/>
</dbReference>
<dbReference type="InterPro" id="IPR001841">
    <property type="entry name" value="Znf_RING"/>
</dbReference>
<dbReference type="InterPro" id="IPR013083">
    <property type="entry name" value="Znf_RING/FYVE/PHD"/>
</dbReference>
<dbReference type="InterPro" id="IPR017907">
    <property type="entry name" value="Znf_RING_CS"/>
</dbReference>
<dbReference type="PANTHER" id="PTHR24103">
    <property type="entry name" value="E3 UBIQUITIN-PROTEIN LIGASE TRIM"/>
    <property type="match status" value="1"/>
</dbReference>
<dbReference type="Pfam" id="PF00643">
    <property type="entry name" value="zf-B_box"/>
    <property type="match status" value="1"/>
</dbReference>
<dbReference type="Pfam" id="PF13445">
    <property type="entry name" value="zf-RING_UBOX"/>
    <property type="match status" value="1"/>
</dbReference>
<dbReference type="SMART" id="SM00336">
    <property type="entry name" value="BBOX"/>
    <property type="match status" value="1"/>
</dbReference>
<dbReference type="SMART" id="SM00184">
    <property type="entry name" value="RING"/>
    <property type="match status" value="1"/>
</dbReference>
<dbReference type="SUPFAM" id="SSF57845">
    <property type="entry name" value="B-box zinc-binding domain"/>
    <property type="match status" value="1"/>
</dbReference>
<dbReference type="SUPFAM" id="SSF57850">
    <property type="entry name" value="RING/U-box"/>
    <property type="match status" value="1"/>
</dbReference>
<dbReference type="PROSITE" id="PS50119">
    <property type="entry name" value="ZF_BBOX"/>
    <property type="match status" value="1"/>
</dbReference>
<dbReference type="PROSITE" id="PS00518">
    <property type="entry name" value="ZF_RING_1"/>
    <property type="match status" value="1"/>
</dbReference>
<dbReference type="PROSITE" id="PS50089">
    <property type="entry name" value="ZF_RING_2"/>
    <property type="match status" value="1"/>
</dbReference>
<proteinExistence type="evidence at transcript level"/>
<protein>
    <recommendedName>
        <fullName>E3 ubiquitin-protein ligase TRIM13</fullName>
        <ecNumber>2.3.2.27</ecNumber>
    </recommendedName>
    <alternativeName>
        <fullName>Putative tumor suppressor RFP2</fullName>
    </alternativeName>
    <alternativeName>
        <fullName evidence="5">RING-type E3 ubiquitin transferase TRIM13</fullName>
    </alternativeName>
    <alternativeName>
        <fullName>Ret finger protein 2</fullName>
    </alternativeName>
    <alternativeName>
        <fullName>Tripartite motif-containing protein 13</fullName>
    </alternativeName>
</protein>